<comment type="function">
    <text evidence="4">Odorant receptor.</text>
</comment>
<comment type="subcellular location">
    <subcellularLocation>
        <location>Cell membrane</location>
        <topology>Multi-pass membrane protein</topology>
    </subcellularLocation>
</comment>
<comment type="similarity">
    <text evidence="2">Belongs to the G-protein coupled receptor 1 family.</text>
</comment>
<comment type="online information" name="Human Olfactory Receptor Data Exploratorium (HORDE)">
    <link uri="http://genome.weizmann.ac.il/horde/card/index/symbol:OR52N5"/>
</comment>
<keyword id="KW-1003">Cell membrane</keyword>
<keyword id="KW-1015">Disulfide bond</keyword>
<keyword id="KW-0297">G-protein coupled receptor</keyword>
<keyword id="KW-0472">Membrane</keyword>
<keyword id="KW-0552">Olfaction</keyword>
<keyword id="KW-0675">Receptor</keyword>
<keyword id="KW-1185">Reference proteome</keyword>
<keyword id="KW-0716">Sensory transduction</keyword>
<keyword id="KW-0807">Transducer</keyword>
<keyword id="KW-0812">Transmembrane</keyword>
<keyword id="KW-1133">Transmembrane helix</keyword>
<proteinExistence type="evidence at transcript level"/>
<protein>
    <recommendedName>
        <fullName>Olfactory receptor 52N5</fullName>
    </recommendedName>
    <alternativeName>
        <fullName>Olfactory receptor OR11-62</fullName>
    </alternativeName>
</protein>
<accession>Q8NH56</accession>
<accession>B9EH12</accession>
<accession>Q6IFG2</accession>
<name>O52N5_HUMAN</name>
<organism>
    <name type="scientific">Homo sapiens</name>
    <name type="common">Human</name>
    <dbReference type="NCBI Taxonomy" id="9606"/>
    <lineage>
        <taxon>Eukaryota</taxon>
        <taxon>Metazoa</taxon>
        <taxon>Chordata</taxon>
        <taxon>Craniata</taxon>
        <taxon>Vertebrata</taxon>
        <taxon>Euteleostomi</taxon>
        <taxon>Mammalia</taxon>
        <taxon>Eutheria</taxon>
        <taxon>Euarchontoglires</taxon>
        <taxon>Primates</taxon>
        <taxon>Haplorrhini</taxon>
        <taxon>Catarrhini</taxon>
        <taxon>Hominidae</taxon>
        <taxon>Homo</taxon>
    </lineage>
</organism>
<evidence type="ECO:0000255" key="1"/>
<evidence type="ECO:0000255" key="2">
    <source>
        <dbReference type="PROSITE-ProRule" id="PRU00521"/>
    </source>
</evidence>
<evidence type="ECO:0000269" key="3">
    <source ref="1"/>
</evidence>
<evidence type="ECO:0000305" key="4"/>
<dbReference type="EMBL" id="AB065535">
    <property type="protein sequence ID" value="BAC05781.1"/>
    <property type="molecule type" value="Genomic_DNA"/>
</dbReference>
<dbReference type="EMBL" id="CH471064">
    <property type="protein sequence ID" value="EAW68762.1"/>
    <property type="molecule type" value="Genomic_DNA"/>
</dbReference>
<dbReference type="EMBL" id="BC136979">
    <property type="protein sequence ID" value="AAI36980.1"/>
    <property type="molecule type" value="mRNA"/>
</dbReference>
<dbReference type="EMBL" id="BC136981">
    <property type="protein sequence ID" value="AAI36982.1"/>
    <property type="molecule type" value="mRNA"/>
</dbReference>
<dbReference type="EMBL" id="BK004300">
    <property type="protein sequence ID" value="DAA04698.1"/>
    <property type="molecule type" value="Genomic_DNA"/>
</dbReference>
<dbReference type="CCDS" id="CCDS31397.1"/>
<dbReference type="RefSeq" id="NP_001001922.2">
    <property type="nucleotide sequence ID" value="NM_001001922.2"/>
</dbReference>
<dbReference type="RefSeq" id="NP_001372591.1">
    <property type="nucleotide sequence ID" value="NM_001385662.1"/>
</dbReference>
<dbReference type="SMR" id="Q8NH56"/>
<dbReference type="BioGRID" id="133386">
    <property type="interactions" value="5"/>
</dbReference>
<dbReference type="FunCoup" id="Q8NH56">
    <property type="interactions" value="518"/>
</dbReference>
<dbReference type="IntAct" id="Q8NH56">
    <property type="interactions" value="4"/>
</dbReference>
<dbReference type="STRING" id="9606.ENSP00000493190"/>
<dbReference type="GlyGen" id="Q8NH56">
    <property type="glycosylation" value="1 site"/>
</dbReference>
<dbReference type="BioMuta" id="OR52N5"/>
<dbReference type="DMDM" id="212276449"/>
<dbReference type="jPOST" id="Q8NH56"/>
<dbReference type="PaxDb" id="9606-ENSP00000322866"/>
<dbReference type="Antibodypedia" id="67180">
    <property type="antibodies" value="74 antibodies from 18 providers"/>
</dbReference>
<dbReference type="DNASU" id="390075"/>
<dbReference type="Ensembl" id="ENST00000317093.2">
    <property type="protein sequence ID" value="ENSP00000322866.2"/>
    <property type="gene ID" value="ENSG00000181009.5"/>
</dbReference>
<dbReference type="Ensembl" id="ENST00000641181.1">
    <property type="protein sequence ID" value="ENSP00000493190.1"/>
    <property type="gene ID" value="ENSG00000181009.5"/>
</dbReference>
<dbReference type="GeneID" id="390075"/>
<dbReference type="KEGG" id="hsa:390075"/>
<dbReference type="MANE-Select" id="ENST00000641181.1">
    <property type="protein sequence ID" value="ENSP00000493190.1"/>
    <property type="RefSeq nucleotide sequence ID" value="NM_001385662.1"/>
    <property type="RefSeq protein sequence ID" value="NP_001372591.1"/>
</dbReference>
<dbReference type="UCSC" id="uc010qzn.2">
    <property type="organism name" value="human"/>
</dbReference>
<dbReference type="AGR" id="HGNC:15231"/>
<dbReference type="CTD" id="390075"/>
<dbReference type="GeneCards" id="OR52N5"/>
<dbReference type="HGNC" id="HGNC:15231">
    <property type="gene designation" value="OR52N5"/>
</dbReference>
<dbReference type="HPA" id="ENSG00000181009">
    <property type="expression patterns" value="Not detected"/>
</dbReference>
<dbReference type="neXtProt" id="NX_Q8NH56"/>
<dbReference type="OpenTargets" id="ENSG00000181009"/>
<dbReference type="PharmGKB" id="PA32429"/>
<dbReference type="VEuPathDB" id="HostDB:ENSG00000181009"/>
<dbReference type="eggNOG" id="ENOG502QV28">
    <property type="taxonomic scope" value="Eukaryota"/>
</dbReference>
<dbReference type="GeneTree" id="ENSGT01130000278278"/>
<dbReference type="HOGENOM" id="CLU_012526_0_0_1"/>
<dbReference type="InParanoid" id="Q8NH56"/>
<dbReference type="OMA" id="CAMYAIS"/>
<dbReference type="OrthoDB" id="5969463at2759"/>
<dbReference type="PAN-GO" id="Q8NH56">
    <property type="GO annotations" value="0 GO annotations based on evolutionary models"/>
</dbReference>
<dbReference type="PhylomeDB" id="Q8NH56"/>
<dbReference type="TreeFam" id="TF343679"/>
<dbReference type="PathwayCommons" id="Q8NH56"/>
<dbReference type="Reactome" id="R-HSA-9752946">
    <property type="pathway name" value="Expression and translocation of olfactory receptors"/>
</dbReference>
<dbReference type="BioGRID-ORCS" id="390075">
    <property type="hits" value="12 hits in 744 CRISPR screens"/>
</dbReference>
<dbReference type="GeneWiki" id="OR52N5"/>
<dbReference type="GenomeRNAi" id="390075"/>
<dbReference type="Pharos" id="Q8NH56">
    <property type="development level" value="Tdark"/>
</dbReference>
<dbReference type="PRO" id="PR:Q8NH56"/>
<dbReference type="Proteomes" id="UP000005640">
    <property type="component" value="Chromosome 11"/>
</dbReference>
<dbReference type="RNAct" id="Q8NH56">
    <property type="molecule type" value="protein"/>
</dbReference>
<dbReference type="Bgee" id="ENSG00000181009">
    <property type="expression patterns" value="Expressed in primordial germ cell in gonad and 19 other cell types or tissues"/>
</dbReference>
<dbReference type="ExpressionAtlas" id="Q8NH56">
    <property type="expression patterns" value="baseline and differential"/>
</dbReference>
<dbReference type="GO" id="GO:0005886">
    <property type="term" value="C:plasma membrane"/>
    <property type="evidence" value="ECO:0000318"/>
    <property type="project" value="GO_Central"/>
</dbReference>
<dbReference type="GO" id="GO:0004930">
    <property type="term" value="F:G protein-coupled receptor activity"/>
    <property type="evidence" value="ECO:0007669"/>
    <property type="project" value="UniProtKB-KW"/>
</dbReference>
<dbReference type="GO" id="GO:0004984">
    <property type="term" value="F:olfactory receptor activity"/>
    <property type="evidence" value="ECO:0000318"/>
    <property type="project" value="GO_Central"/>
</dbReference>
<dbReference type="FunFam" id="1.20.1070.10:FF:000006">
    <property type="entry name" value="Olfactory receptor"/>
    <property type="match status" value="1"/>
</dbReference>
<dbReference type="Gene3D" id="1.20.1070.10">
    <property type="entry name" value="Rhodopsin 7-helix transmembrane proteins"/>
    <property type="match status" value="1"/>
</dbReference>
<dbReference type="InterPro" id="IPR000276">
    <property type="entry name" value="GPCR_Rhodpsn"/>
</dbReference>
<dbReference type="InterPro" id="IPR017452">
    <property type="entry name" value="GPCR_Rhodpsn_7TM"/>
</dbReference>
<dbReference type="InterPro" id="IPR000725">
    <property type="entry name" value="Olfact_rcpt"/>
</dbReference>
<dbReference type="InterPro" id="IPR050402">
    <property type="entry name" value="OR51/52/56-like"/>
</dbReference>
<dbReference type="PANTHER" id="PTHR26450:SF18">
    <property type="entry name" value="OLFACTORY RECEPTOR 52N5"/>
    <property type="match status" value="1"/>
</dbReference>
<dbReference type="PANTHER" id="PTHR26450">
    <property type="entry name" value="OLFACTORY RECEPTOR 56B1-RELATED"/>
    <property type="match status" value="1"/>
</dbReference>
<dbReference type="Pfam" id="PF13853">
    <property type="entry name" value="7tm_4"/>
    <property type="match status" value="1"/>
</dbReference>
<dbReference type="PRINTS" id="PR00245">
    <property type="entry name" value="OLFACTORYR"/>
</dbReference>
<dbReference type="SUPFAM" id="SSF81321">
    <property type="entry name" value="Family A G protein-coupled receptor-like"/>
    <property type="match status" value="1"/>
</dbReference>
<dbReference type="PROSITE" id="PS00237">
    <property type="entry name" value="G_PROTEIN_RECEP_F1_1"/>
    <property type="match status" value="1"/>
</dbReference>
<dbReference type="PROSITE" id="PS50262">
    <property type="entry name" value="G_PROTEIN_RECEP_F1_2"/>
    <property type="match status" value="1"/>
</dbReference>
<reference key="1">
    <citation type="submission" date="2001-07" db="EMBL/GenBank/DDBJ databases">
        <title>Genome-wide discovery and analysis of human seven transmembrane helix receptor genes.</title>
        <authorList>
            <person name="Suwa M."/>
            <person name="Sato T."/>
            <person name="Okouchi I."/>
            <person name="Arita M."/>
            <person name="Futami K."/>
            <person name="Matsumoto S."/>
            <person name="Tsutsumi S."/>
            <person name="Aburatani H."/>
            <person name="Asai K."/>
            <person name="Akiyama Y."/>
        </authorList>
    </citation>
    <scope>NUCLEOTIDE SEQUENCE [GENOMIC DNA]</scope>
    <scope>VARIANT ILE-133</scope>
</reference>
<reference key="2">
    <citation type="submission" date="2005-09" db="EMBL/GenBank/DDBJ databases">
        <authorList>
            <person name="Mural R.J."/>
            <person name="Istrail S."/>
            <person name="Sutton G.G."/>
            <person name="Florea L."/>
            <person name="Halpern A.L."/>
            <person name="Mobarry C.M."/>
            <person name="Lippert R."/>
            <person name="Walenz B."/>
            <person name="Shatkay H."/>
            <person name="Dew I."/>
            <person name="Miller J.R."/>
            <person name="Flanigan M.J."/>
            <person name="Edwards N.J."/>
            <person name="Bolanos R."/>
            <person name="Fasulo D."/>
            <person name="Halldorsson B.V."/>
            <person name="Hannenhalli S."/>
            <person name="Turner R."/>
            <person name="Yooseph S."/>
            <person name="Lu F."/>
            <person name="Nusskern D.R."/>
            <person name="Shue B.C."/>
            <person name="Zheng X.H."/>
            <person name="Zhong F."/>
            <person name="Delcher A.L."/>
            <person name="Huson D.H."/>
            <person name="Kravitz S.A."/>
            <person name="Mouchard L."/>
            <person name="Reinert K."/>
            <person name="Remington K.A."/>
            <person name="Clark A.G."/>
            <person name="Waterman M.S."/>
            <person name="Eichler E.E."/>
            <person name="Adams M.D."/>
            <person name="Hunkapiller M.W."/>
            <person name="Myers E.W."/>
            <person name="Venter J.C."/>
        </authorList>
    </citation>
    <scope>NUCLEOTIDE SEQUENCE [LARGE SCALE GENOMIC DNA]</scope>
</reference>
<reference key="3">
    <citation type="journal article" date="2004" name="Genome Res.">
        <title>The status, quality, and expansion of the NIH full-length cDNA project: the Mammalian Gene Collection (MGC).</title>
        <authorList>
            <consortium name="The MGC Project Team"/>
        </authorList>
    </citation>
    <scope>NUCLEOTIDE SEQUENCE [LARGE SCALE MRNA]</scope>
    <source>
        <tissue>Testis</tissue>
    </source>
</reference>
<reference key="4">
    <citation type="journal article" date="2004" name="Proc. Natl. Acad. Sci. U.S.A.">
        <title>The human olfactory receptor gene family.</title>
        <authorList>
            <person name="Malnic B."/>
            <person name="Godfrey P.A."/>
            <person name="Buck L.B."/>
        </authorList>
    </citation>
    <scope>IDENTIFICATION</scope>
</reference>
<reference key="5">
    <citation type="journal article" date="2004" name="Proc. Natl. Acad. Sci. U.S.A.">
        <authorList>
            <person name="Malnic B."/>
            <person name="Godfrey P.A."/>
            <person name="Buck L.B."/>
        </authorList>
    </citation>
    <scope>ERRATUM OF PUBMED:14983052</scope>
</reference>
<sequence>MPLFNSLCWFPTIHVTPPSFILNGIPGLERVHVWISLPLCTMYIIFLVGNLGLVYLIYYEESLHHPMYFFFGHALSLIDLLTCTTTLPNALCIFWFSLKEINFNACLAQMFFVHGFTGVESGVLMLMALDRYVAICYPLRYATTLTNPIIAKAELATFLRGVLLMIPFPFLVKRLPFCQSNIISHTYCDHMSVVKLSCASIKVNVIYGLMVALLIGVFDICCISLSYTLILKAAISLSSSDARQKAFSTCTAHISAIIITYVPAFFTFFAHRFGGHTIPPSLHIIVANLYLLLPPTLNPIVYGVKTKQIRKSVIKFFQGDKGAG</sequence>
<gene>
    <name type="primary">OR52N5</name>
</gene>
<feature type="chain" id="PRO_0000150789" description="Olfactory receptor 52N5">
    <location>
        <begin position="1"/>
        <end position="324"/>
    </location>
</feature>
<feature type="topological domain" description="Extracellular" evidence="1">
    <location>
        <begin position="1"/>
        <end position="33"/>
    </location>
</feature>
<feature type="transmembrane region" description="Helical; Name=1" evidence="1">
    <location>
        <begin position="34"/>
        <end position="54"/>
    </location>
</feature>
<feature type="topological domain" description="Cytoplasmic" evidence="1">
    <location>
        <begin position="55"/>
        <end position="62"/>
    </location>
</feature>
<feature type="transmembrane region" description="Helical; Name=2" evidence="1">
    <location>
        <begin position="63"/>
        <end position="84"/>
    </location>
</feature>
<feature type="topological domain" description="Extracellular" evidence="1">
    <location>
        <begin position="85"/>
        <end position="108"/>
    </location>
</feature>
<feature type="transmembrane region" description="Helical; Name=3" evidence="1">
    <location>
        <begin position="109"/>
        <end position="129"/>
    </location>
</feature>
<feature type="topological domain" description="Cytoplasmic" evidence="1">
    <location>
        <begin position="130"/>
        <end position="148"/>
    </location>
</feature>
<feature type="transmembrane region" description="Helical; Name=4" evidence="1">
    <location>
        <begin position="149"/>
        <end position="169"/>
    </location>
</feature>
<feature type="topological domain" description="Extracellular" evidence="1">
    <location>
        <begin position="170"/>
        <end position="205"/>
    </location>
</feature>
<feature type="transmembrane region" description="Helical; Name=5" evidence="1">
    <location>
        <begin position="206"/>
        <end position="226"/>
    </location>
</feature>
<feature type="topological domain" description="Cytoplasmic" evidence="1">
    <location>
        <begin position="227"/>
        <end position="246"/>
    </location>
</feature>
<feature type="transmembrane region" description="Helical; Name=6" evidence="1">
    <location>
        <begin position="247"/>
        <end position="267"/>
    </location>
</feature>
<feature type="topological domain" description="Extracellular" evidence="1">
    <location>
        <begin position="268"/>
        <end position="283"/>
    </location>
</feature>
<feature type="transmembrane region" description="Helical; Name=7" evidence="1">
    <location>
        <begin position="284"/>
        <end position="304"/>
    </location>
</feature>
<feature type="topological domain" description="Cytoplasmic" evidence="1">
    <location>
        <begin position="305"/>
        <end position="324"/>
    </location>
</feature>
<feature type="disulfide bond" evidence="2">
    <location>
        <begin position="106"/>
        <end position="198"/>
    </location>
</feature>
<feature type="sequence variant" id="VAR_047147" description="In dbSNP:rs12360738." evidence="3">
    <original>V</original>
    <variation>I</variation>
    <location>
        <position position="133"/>
    </location>
</feature>